<comment type="function">
    <text evidence="1">Could be a mediator in iron transactions between iron acquisition and iron-requiring processes, such as synthesis and/or repair of Fe-S clusters in biosynthetic enzymes.</text>
</comment>
<comment type="subunit">
    <text evidence="1">Monomer.</text>
</comment>
<comment type="similarity">
    <text evidence="1">Belongs to the Fe(2+)-trafficking protein family.</text>
</comment>
<accession>Q1R763</accession>
<keyword id="KW-0408">Iron</keyword>
<evidence type="ECO:0000255" key="1">
    <source>
        <dbReference type="HAMAP-Rule" id="MF_00686"/>
    </source>
</evidence>
<feature type="chain" id="PRO_1000045033" description="Probable Fe(2+)-trafficking protein">
    <location>
        <begin position="1"/>
        <end position="91"/>
    </location>
</feature>
<gene>
    <name evidence="1" type="primary">yggX</name>
    <name type="ordered locus">UTI89_C3353</name>
</gene>
<protein>
    <recommendedName>
        <fullName evidence="1">Probable Fe(2+)-trafficking protein</fullName>
    </recommendedName>
</protein>
<dbReference type="EMBL" id="CP000243">
    <property type="protein sequence ID" value="ABE08801.1"/>
    <property type="molecule type" value="Genomic_DNA"/>
</dbReference>
<dbReference type="RefSeq" id="WP_000091700.1">
    <property type="nucleotide sequence ID" value="NZ_CP064825.1"/>
</dbReference>
<dbReference type="SMR" id="Q1R763"/>
<dbReference type="KEGG" id="eci:UTI89_C3353"/>
<dbReference type="HOGENOM" id="CLU_170994_0_0_6"/>
<dbReference type="Proteomes" id="UP000001952">
    <property type="component" value="Chromosome"/>
</dbReference>
<dbReference type="GO" id="GO:0005829">
    <property type="term" value="C:cytosol"/>
    <property type="evidence" value="ECO:0007669"/>
    <property type="project" value="TreeGrafter"/>
</dbReference>
<dbReference type="GO" id="GO:0005506">
    <property type="term" value="F:iron ion binding"/>
    <property type="evidence" value="ECO:0007669"/>
    <property type="project" value="UniProtKB-UniRule"/>
</dbReference>
<dbReference type="GO" id="GO:0034599">
    <property type="term" value="P:cellular response to oxidative stress"/>
    <property type="evidence" value="ECO:0007669"/>
    <property type="project" value="TreeGrafter"/>
</dbReference>
<dbReference type="FunFam" id="1.10.3880.10:FF:000001">
    <property type="entry name" value="Probable Fe(2+)-trafficking protein"/>
    <property type="match status" value="1"/>
</dbReference>
<dbReference type="Gene3D" id="1.10.3880.10">
    <property type="entry name" value="Fe(II) trafficking protein YggX"/>
    <property type="match status" value="1"/>
</dbReference>
<dbReference type="HAMAP" id="MF_00686">
    <property type="entry name" value="Fe_traffic_YggX"/>
    <property type="match status" value="1"/>
</dbReference>
<dbReference type="InterPro" id="IPR007457">
    <property type="entry name" value="Fe_traffick_prot_YggX"/>
</dbReference>
<dbReference type="InterPro" id="IPR036766">
    <property type="entry name" value="Fe_traffick_prot_YggX_sf"/>
</dbReference>
<dbReference type="NCBIfam" id="NF003817">
    <property type="entry name" value="PRK05408.1"/>
    <property type="match status" value="1"/>
</dbReference>
<dbReference type="PANTHER" id="PTHR36965">
    <property type="entry name" value="FE(2+)-TRAFFICKING PROTEIN-RELATED"/>
    <property type="match status" value="1"/>
</dbReference>
<dbReference type="PANTHER" id="PTHR36965:SF1">
    <property type="entry name" value="FE(2+)-TRAFFICKING PROTEIN-RELATED"/>
    <property type="match status" value="1"/>
</dbReference>
<dbReference type="Pfam" id="PF04362">
    <property type="entry name" value="Iron_traffic"/>
    <property type="match status" value="1"/>
</dbReference>
<dbReference type="PIRSF" id="PIRSF029827">
    <property type="entry name" value="Fe_traffic_YggX"/>
    <property type="match status" value="1"/>
</dbReference>
<dbReference type="SUPFAM" id="SSF111148">
    <property type="entry name" value="YggX-like"/>
    <property type="match status" value="1"/>
</dbReference>
<sequence>MSRTIFCTFLQREAEGQDFQLYPGELGKRIYNEISKEAWAQWQHKQTMLINEKKLNMMNAEHRKLLEQEMVNFLFEGKEVHIEGYTPEDKK</sequence>
<reference key="1">
    <citation type="journal article" date="2006" name="Proc. Natl. Acad. Sci. U.S.A.">
        <title>Identification of genes subject to positive selection in uropathogenic strains of Escherichia coli: a comparative genomics approach.</title>
        <authorList>
            <person name="Chen S.L."/>
            <person name="Hung C.-S."/>
            <person name="Xu J."/>
            <person name="Reigstad C.S."/>
            <person name="Magrini V."/>
            <person name="Sabo A."/>
            <person name="Blasiar D."/>
            <person name="Bieri T."/>
            <person name="Meyer R.R."/>
            <person name="Ozersky P."/>
            <person name="Armstrong J.R."/>
            <person name="Fulton R.S."/>
            <person name="Latreille J.P."/>
            <person name="Spieth J."/>
            <person name="Hooton T.M."/>
            <person name="Mardis E.R."/>
            <person name="Hultgren S.J."/>
            <person name="Gordon J.I."/>
        </authorList>
    </citation>
    <scope>NUCLEOTIDE SEQUENCE [LARGE SCALE GENOMIC DNA]</scope>
    <source>
        <strain>UTI89 / UPEC</strain>
    </source>
</reference>
<name>FETP_ECOUT</name>
<proteinExistence type="inferred from homology"/>
<organism>
    <name type="scientific">Escherichia coli (strain UTI89 / UPEC)</name>
    <dbReference type="NCBI Taxonomy" id="364106"/>
    <lineage>
        <taxon>Bacteria</taxon>
        <taxon>Pseudomonadati</taxon>
        <taxon>Pseudomonadota</taxon>
        <taxon>Gammaproteobacteria</taxon>
        <taxon>Enterobacterales</taxon>
        <taxon>Enterobacteriaceae</taxon>
        <taxon>Escherichia</taxon>
    </lineage>
</organism>